<protein>
    <recommendedName>
        <fullName evidence="1">Histidine--tRNA ligase</fullName>
        <ecNumber evidence="1">6.1.1.21</ecNumber>
    </recommendedName>
    <alternativeName>
        <fullName evidence="1">Histidyl-tRNA synthetase</fullName>
        <shortName evidence="1">HisRS</shortName>
    </alternativeName>
</protein>
<feature type="chain" id="PRO_1000016385" description="Histidine--tRNA ligase">
    <location>
        <begin position="1"/>
        <end position="439"/>
    </location>
</feature>
<sequence length="439" mass="50668">MENQKNFLTTAPYKGTRDFYPEEMRLRNWMFSIMRETVLSFGYEEYDGPILESFDLYKAKSGEEIVERQLYDFIDKGERRVAIRPEMTPTLARMVAGNLRNLPRPVRWFSIPNLWRYEQPGKGRLREHWQLNVDLFGVDTHRAELEILLMADSILKKFGAPTGSYQIKVSHRKLLDSFLKNSLKLSDHQVHGVSKLLDKKSKISPETFEAEIKPLLNNFNEQFSLIETYLASNLETVSTIPGIDPDSIHFIRNLFQELGELGIDKQLVFDPSIIRGFDYYTGCIFEVFDTNPENRRSLYGGGRYDNLIGLFSKEQLSGIGFGLGDVTLKSFLENHNLIPDLSREKTLFLPIMDESIFVDTFKLSKELRENGILTETMLDSAKIGKQIQVAEKKGYRYVLFLGESEIRTETVQIKDLVSGEQKSLPRKGLSDILKKDFRL</sequence>
<comment type="catalytic activity">
    <reaction evidence="1">
        <text>tRNA(His) + L-histidine + ATP = L-histidyl-tRNA(His) + AMP + diphosphate + H(+)</text>
        <dbReference type="Rhea" id="RHEA:17313"/>
        <dbReference type="Rhea" id="RHEA-COMP:9665"/>
        <dbReference type="Rhea" id="RHEA-COMP:9689"/>
        <dbReference type="ChEBI" id="CHEBI:15378"/>
        <dbReference type="ChEBI" id="CHEBI:30616"/>
        <dbReference type="ChEBI" id="CHEBI:33019"/>
        <dbReference type="ChEBI" id="CHEBI:57595"/>
        <dbReference type="ChEBI" id="CHEBI:78442"/>
        <dbReference type="ChEBI" id="CHEBI:78527"/>
        <dbReference type="ChEBI" id="CHEBI:456215"/>
        <dbReference type="EC" id="6.1.1.21"/>
    </reaction>
</comment>
<comment type="subunit">
    <text evidence="1">Homodimer.</text>
</comment>
<comment type="subcellular location">
    <subcellularLocation>
        <location evidence="1">Cytoplasm</location>
    </subcellularLocation>
</comment>
<comment type="similarity">
    <text evidence="1">Belongs to the class-II aminoacyl-tRNA synthetase family.</text>
</comment>
<keyword id="KW-0030">Aminoacyl-tRNA synthetase</keyword>
<keyword id="KW-0067">ATP-binding</keyword>
<keyword id="KW-0963">Cytoplasm</keyword>
<keyword id="KW-0436">Ligase</keyword>
<keyword id="KW-0547">Nucleotide-binding</keyword>
<keyword id="KW-0648">Protein biosynthesis</keyword>
<proteinExistence type="inferred from homology"/>
<reference key="1">
    <citation type="journal article" date="2006" name="Proc. Natl. Acad. Sci. U.S.A.">
        <title>Genome reduction in Leptospira borgpetersenii reflects limited transmission potential.</title>
        <authorList>
            <person name="Bulach D.M."/>
            <person name="Zuerner R.L."/>
            <person name="Wilson P."/>
            <person name="Seemann T."/>
            <person name="McGrath A."/>
            <person name="Cullen P.A."/>
            <person name="Davis J."/>
            <person name="Johnson M."/>
            <person name="Kuczek E."/>
            <person name="Alt D.P."/>
            <person name="Peterson-Burch B."/>
            <person name="Coppel R.L."/>
            <person name="Rood J.I."/>
            <person name="Davies J.K."/>
            <person name="Adler B."/>
        </authorList>
    </citation>
    <scope>NUCLEOTIDE SEQUENCE [LARGE SCALE GENOMIC DNA]</scope>
    <source>
        <strain>L550</strain>
    </source>
</reference>
<evidence type="ECO:0000255" key="1">
    <source>
        <dbReference type="HAMAP-Rule" id="MF_00127"/>
    </source>
</evidence>
<name>SYH_LEPBL</name>
<organism>
    <name type="scientific">Leptospira borgpetersenii serovar Hardjo-bovis (strain L550)</name>
    <dbReference type="NCBI Taxonomy" id="355276"/>
    <lineage>
        <taxon>Bacteria</taxon>
        <taxon>Pseudomonadati</taxon>
        <taxon>Spirochaetota</taxon>
        <taxon>Spirochaetia</taxon>
        <taxon>Leptospirales</taxon>
        <taxon>Leptospiraceae</taxon>
        <taxon>Leptospira</taxon>
    </lineage>
</organism>
<dbReference type="EC" id="6.1.1.21" evidence="1"/>
<dbReference type="EMBL" id="CP000348">
    <property type="protein sequence ID" value="ABJ80308.1"/>
    <property type="molecule type" value="Genomic_DNA"/>
</dbReference>
<dbReference type="RefSeq" id="WP_011671204.1">
    <property type="nucleotide sequence ID" value="NC_008508.1"/>
</dbReference>
<dbReference type="SMR" id="Q04X87"/>
<dbReference type="KEGG" id="lbl:LBL_2996"/>
<dbReference type="HOGENOM" id="CLU_025113_3_1_12"/>
<dbReference type="GO" id="GO:0005737">
    <property type="term" value="C:cytoplasm"/>
    <property type="evidence" value="ECO:0007669"/>
    <property type="project" value="UniProtKB-SubCell"/>
</dbReference>
<dbReference type="GO" id="GO:0005524">
    <property type="term" value="F:ATP binding"/>
    <property type="evidence" value="ECO:0007669"/>
    <property type="project" value="UniProtKB-UniRule"/>
</dbReference>
<dbReference type="GO" id="GO:0004821">
    <property type="term" value="F:histidine-tRNA ligase activity"/>
    <property type="evidence" value="ECO:0007669"/>
    <property type="project" value="UniProtKB-UniRule"/>
</dbReference>
<dbReference type="GO" id="GO:0006427">
    <property type="term" value="P:histidyl-tRNA aminoacylation"/>
    <property type="evidence" value="ECO:0007669"/>
    <property type="project" value="UniProtKB-UniRule"/>
</dbReference>
<dbReference type="CDD" id="cd00773">
    <property type="entry name" value="HisRS-like_core"/>
    <property type="match status" value="1"/>
</dbReference>
<dbReference type="CDD" id="cd00859">
    <property type="entry name" value="HisRS_anticodon"/>
    <property type="match status" value="1"/>
</dbReference>
<dbReference type="FunFam" id="3.30.930.10:FF:000122">
    <property type="entry name" value="Histidine--tRNA ligase"/>
    <property type="match status" value="1"/>
</dbReference>
<dbReference type="Gene3D" id="3.40.50.800">
    <property type="entry name" value="Anticodon-binding domain"/>
    <property type="match status" value="1"/>
</dbReference>
<dbReference type="Gene3D" id="3.30.930.10">
    <property type="entry name" value="Bira Bifunctional Protein, Domain 2"/>
    <property type="match status" value="1"/>
</dbReference>
<dbReference type="HAMAP" id="MF_00127">
    <property type="entry name" value="His_tRNA_synth"/>
    <property type="match status" value="1"/>
</dbReference>
<dbReference type="InterPro" id="IPR006195">
    <property type="entry name" value="aa-tRNA-synth_II"/>
</dbReference>
<dbReference type="InterPro" id="IPR045864">
    <property type="entry name" value="aa-tRNA-synth_II/BPL/LPL"/>
</dbReference>
<dbReference type="InterPro" id="IPR004154">
    <property type="entry name" value="Anticodon-bd"/>
</dbReference>
<dbReference type="InterPro" id="IPR036621">
    <property type="entry name" value="Anticodon-bd_dom_sf"/>
</dbReference>
<dbReference type="InterPro" id="IPR015807">
    <property type="entry name" value="His-tRNA-ligase"/>
</dbReference>
<dbReference type="InterPro" id="IPR041715">
    <property type="entry name" value="HisRS-like_core"/>
</dbReference>
<dbReference type="InterPro" id="IPR004516">
    <property type="entry name" value="HisRS/HisZ"/>
</dbReference>
<dbReference type="InterPro" id="IPR033656">
    <property type="entry name" value="HisRS_anticodon"/>
</dbReference>
<dbReference type="NCBIfam" id="TIGR00442">
    <property type="entry name" value="hisS"/>
    <property type="match status" value="1"/>
</dbReference>
<dbReference type="PANTHER" id="PTHR43707:SF1">
    <property type="entry name" value="HISTIDINE--TRNA LIGASE, MITOCHONDRIAL-RELATED"/>
    <property type="match status" value="1"/>
</dbReference>
<dbReference type="PANTHER" id="PTHR43707">
    <property type="entry name" value="HISTIDYL-TRNA SYNTHETASE"/>
    <property type="match status" value="1"/>
</dbReference>
<dbReference type="Pfam" id="PF03129">
    <property type="entry name" value="HGTP_anticodon"/>
    <property type="match status" value="1"/>
</dbReference>
<dbReference type="Pfam" id="PF13393">
    <property type="entry name" value="tRNA-synt_His"/>
    <property type="match status" value="1"/>
</dbReference>
<dbReference type="PIRSF" id="PIRSF001549">
    <property type="entry name" value="His-tRNA_synth"/>
    <property type="match status" value="1"/>
</dbReference>
<dbReference type="SUPFAM" id="SSF52954">
    <property type="entry name" value="Class II aaRS ABD-related"/>
    <property type="match status" value="1"/>
</dbReference>
<dbReference type="SUPFAM" id="SSF55681">
    <property type="entry name" value="Class II aaRS and biotin synthetases"/>
    <property type="match status" value="1"/>
</dbReference>
<dbReference type="PROSITE" id="PS50862">
    <property type="entry name" value="AA_TRNA_LIGASE_II"/>
    <property type="match status" value="1"/>
</dbReference>
<accession>Q04X87</accession>
<gene>
    <name evidence="1" type="primary">hisS</name>
    <name type="ordered locus">LBL_2996</name>
</gene>